<evidence type="ECO:0000255" key="1">
    <source>
        <dbReference type="HAMAP-Rule" id="MF_00210"/>
    </source>
</evidence>
<feature type="chain" id="PRO_1000012406" description="3-phosphoshikimate 1-carboxyvinyltransferase">
    <location>
        <begin position="1"/>
        <end position="427"/>
    </location>
</feature>
<feature type="active site" description="Proton acceptor" evidence="1">
    <location>
        <position position="313"/>
    </location>
</feature>
<feature type="binding site" evidence="1">
    <location>
        <position position="22"/>
    </location>
    <ligand>
        <name>3-phosphoshikimate</name>
        <dbReference type="ChEBI" id="CHEBI:145989"/>
    </ligand>
</feature>
<feature type="binding site" evidence="1">
    <location>
        <position position="22"/>
    </location>
    <ligand>
        <name>phosphoenolpyruvate</name>
        <dbReference type="ChEBI" id="CHEBI:58702"/>
    </ligand>
</feature>
<feature type="binding site" evidence="1">
    <location>
        <position position="23"/>
    </location>
    <ligand>
        <name>3-phosphoshikimate</name>
        <dbReference type="ChEBI" id="CHEBI:145989"/>
    </ligand>
</feature>
<feature type="binding site" evidence="1">
    <location>
        <position position="27"/>
    </location>
    <ligand>
        <name>3-phosphoshikimate</name>
        <dbReference type="ChEBI" id="CHEBI:145989"/>
    </ligand>
</feature>
<feature type="binding site" evidence="1">
    <location>
        <position position="96"/>
    </location>
    <ligand>
        <name>phosphoenolpyruvate</name>
        <dbReference type="ChEBI" id="CHEBI:58702"/>
    </ligand>
</feature>
<feature type="binding site" evidence="1">
    <location>
        <position position="124"/>
    </location>
    <ligand>
        <name>phosphoenolpyruvate</name>
        <dbReference type="ChEBI" id="CHEBI:58702"/>
    </ligand>
</feature>
<feature type="binding site" evidence="1">
    <location>
        <position position="170"/>
    </location>
    <ligand>
        <name>3-phosphoshikimate</name>
        <dbReference type="ChEBI" id="CHEBI:145989"/>
    </ligand>
</feature>
<feature type="binding site" evidence="1">
    <location>
        <position position="171"/>
    </location>
    <ligand>
        <name>3-phosphoshikimate</name>
        <dbReference type="ChEBI" id="CHEBI:145989"/>
    </ligand>
</feature>
<feature type="binding site" evidence="1">
    <location>
        <position position="172"/>
    </location>
    <ligand>
        <name>3-phosphoshikimate</name>
        <dbReference type="ChEBI" id="CHEBI:145989"/>
    </ligand>
</feature>
<feature type="binding site" evidence="1">
    <location>
        <position position="172"/>
    </location>
    <ligand>
        <name>phosphoenolpyruvate</name>
        <dbReference type="ChEBI" id="CHEBI:58702"/>
    </ligand>
</feature>
<feature type="binding site" evidence="1">
    <location>
        <position position="198"/>
    </location>
    <ligand>
        <name>3-phosphoshikimate</name>
        <dbReference type="ChEBI" id="CHEBI:145989"/>
    </ligand>
</feature>
<feature type="binding site" evidence="1">
    <location>
        <position position="313"/>
    </location>
    <ligand>
        <name>3-phosphoshikimate</name>
        <dbReference type="ChEBI" id="CHEBI:145989"/>
    </ligand>
</feature>
<feature type="binding site" evidence="1">
    <location>
        <position position="336"/>
    </location>
    <ligand>
        <name>3-phosphoshikimate</name>
        <dbReference type="ChEBI" id="CHEBI:145989"/>
    </ligand>
</feature>
<feature type="binding site" evidence="1">
    <location>
        <position position="340"/>
    </location>
    <ligand>
        <name>3-phosphoshikimate</name>
        <dbReference type="ChEBI" id="CHEBI:145989"/>
    </ligand>
</feature>
<feature type="binding site" evidence="1">
    <location>
        <position position="344"/>
    </location>
    <ligand>
        <name>phosphoenolpyruvate</name>
        <dbReference type="ChEBI" id="CHEBI:58702"/>
    </ligand>
</feature>
<feature type="binding site" evidence="1">
    <location>
        <position position="386"/>
    </location>
    <ligand>
        <name>phosphoenolpyruvate</name>
        <dbReference type="ChEBI" id="CHEBI:58702"/>
    </ligand>
</feature>
<feature type="binding site" evidence="1">
    <location>
        <position position="411"/>
    </location>
    <ligand>
        <name>phosphoenolpyruvate</name>
        <dbReference type="ChEBI" id="CHEBI:58702"/>
    </ligand>
</feature>
<accession>A4SM13</accession>
<sequence>MNSLRLEPISRVAGEVNLPGSKSVSNRALLLAALARGTTRLTNLLDSDDIRHMLAALTQLGVKYKLSADKTECTVHGLGRSFAVSAPVNLFLGNAGTAMRPLCAALCLGSGEYMLGGEPRMEERPIGHLVDALREAGAHIQYLKKDGYPPLVVDAKGLWGGDVHVDGSVSSQFLTAFLMAAPMAAGDTRIHIKGELVSKPYIDITLHIMKQFGVVIEHDNYKLFYIKGNQSYVSPGDFLVEGDASSASYFLAAGAIKGKVRVTGIGKHSIQGDIHFADVLERMGARITWGDDFIEAEQGPLHGVDMDMNHIPDAAMTIAVAALFAEGPTSIRNIYNWRVKETDRLHAMATELRKLGVEVEEGHDFITVTPPTQLKHAEIDTYNDHRIAMCFSLVALSDIAVTINDPGCTSKTFPDYFDKLASVSQAV</sequence>
<reference key="1">
    <citation type="journal article" date="2008" name="BMC Genomics">
        <title>The genome of Aeromonas salmonicida subsp. salmonicida A449: insights into the evolution of a fish pathogen.</title>
        <authorList>
            <person name="Reith M.E."/>
            <person name="Singh R.K."/>
            <person name="Curtis B."/>
            <person name="Boyd J.M."/>
            <person name="Bouevitch A."/>
            <person name="Kimball J."/>
            <person name="Munholland J."/>
            <person name="Murphy C."/>
            <person name="Sarty D."/>
            <person name="Williams J."/>
            <person name="Nash J.H."/>
            <person name="Johnson S.C."/>
            <person name="Brown L.L."/>
        </authorList>
    </citation>
    <scope>NUCLEOTIDE SEQUENCE [LARGE SCALE GENOMIC DNA]</scope>
    <source>
        <strain>A449</strain>
    </source>
</reference>
<organism>
    <name type="scientific">Aeromonas salmonicida (strain A449)</name>
    <dbReference type="NCBI Taxonomy" id="382245"/>
    <lineage>
        <taxon>Bacteria</taxon>
        <taxon>Pseudomonadati</taxon>
        <taxon>Pseudomonadota</taxon>
        <taxon>Gammaproteobacteria</taxon>
        <taxon>Aeromonadales</taxon>
        <taxon>Aeromonadaceae</taxon>
        <taxon>Aeromonas</taxon>
    </lineage>
</organism>
<keyword id="KW-0028">Amino-acid biosynthesis</keyword>
<keyword id="KW-0057">Aromatic amino acid biosynthesis</keyword>
<keyword id="KW-0963">Cytoplasm</keyword>
<keyword id="KW-0808">Transferase</keyword>
<gene>
    <name evidence="1" type="primary">aroA</name>
    <name type="ordered locus">ASA_1859</name>
</gene>
<protein>
    <recommendedName>
        <fullName evidence="1">3-phosphoshikimate 1-carboxyvinyltransferase</fullName>
        <ecNumber evidence="1">2.5.1.19</ecNumber>
    </recommendedName>
    <alternativeName>
        <fullName evidence="1">5-enolpyruvylshikimate-3-phosphate synthase</fullName>
        <shortName evidence="1">EPSP synthase</shortName>
        <shortName evidence="1">EPSPS</shortName>
    </alternativeName>
</protein>
<proteinExistence type="inferred from homology"/>
<name>AROA_AERS4</name>
<dbReference type="EC" id="2.5.1.19" evidence="1"/>
<dbReference type="EMBL" id="CP000644">
    <property type="protein sequence ID" value="ABO89935.1"/>
    <property type="molecule type" value="Genomic_DNA"/>
</dbReference>
<dbReference type="RefSeq" id="WP_005315305.1">
    <property type="nucleotide sequence ID" value="NC_009348.1"/>
</dbReference>
<dbReference type="SMR" id="A4SM13"/>
<dbReference type="STRING" id="29491.GCA_000820065_03123"/>
<dbReference type="KEGG" id="asa:ASA_1859"/>
<dbReference type="eggNOG" id="COG0128">
    <property type="taxonomic scope" value="Bacteria"/>
</dbReference>
<dbReference type="HOGENOM" id="CLU_024321_0_0_6"/>
<dbReference type="UniPathway" id="UPA00053">
    <property type="reaction ID" value="UER00089"/>
</dbReference>
<dbReference type="Proteomes" id="UP000000225">
    <property type="component" value="Chromosome"/>
</dbReference>
<dbReference type="GO" id="GO:0005737">
    <property type="term" value="C:cytoplasm"/>
    <property type="evidence" value="ECO:0007669"/>
    <property type="project" value="UniProtKB-SubCell"/>
</dbReference>
<dbReference type="GO" id="GO:0003866">
    <property type="term" value="F:3-phosphoshikimate 1-carboxyvinyltransferase activity"/>
    <property type="evidence" value="ECO:0007669"/>
    <property type="project" value="UniProtKB-UniRule"/>
</dbReference>
<dbReference type="GO" id="GO:0008652">
    <property type="term" value="P:amino acid biosynthetic process"/>
    <property type="evidence" value="ECO:0007669"/>
    <property type="project" value="UniProtKB-KW"/>
</dbReference>
<dbReference type="GO" id="GO:0009073">
    <property type="term" value="P:aromatic amino acid family biosynthetic process"/>
    <property type="evidence" value="ECO:0007669"/>
    <property type="project" value="UniProtKB-KW"/>
</dbReference>
<dbReference type="GO" id="GO:0009423">
    <property type="term" value="P:chorismate biosynthetic process"/>
    <property type="evidence" value="ECO:0007669"/>
    <property type="project" value="UniProtKB-UniRule"/>
</dbReference>
<dbReference type="CDD" id="cd01556">
    <property type="entry name" value="EPSP_synthase"/>
    <property type="match status" value="1"/>
</dbReference>
<dbReference type="FunFam" id="3.65.10.10:FF:000003">
    <property type="entry name" value="3-phosphoshikimate 1-carboxyvinyltransferase"/>
    <property type="match status" value="1"/>
</dbReference>
<dbReference type="FunFam" id="3.65.10.10:FF:000004">
    <property type="entry name" value="3-phosphoshikimate 1-carboxyvinyltransferase"/>
    <property type="match status" value="1"/>
</dbReference>
<dbReference type="Gene3D" id="3.65.10.10">
    <property type="entry name" value="Enolpyruvate transferase domain"/>
    <property type="match status" value="2"/>
</dbReference>
<dbReference type="HAMAP" id="MF_00210">
    <property type="entry name" value="EPSP_synth"/>
    <property type="match status" value="1"/>
</dbReference>
<dbReference type="InterPro" id="IPR001986">
    <property type="entry name" value="Enolpyruvate_Tfrase_dom"/>
</dbReference>
<dbReference type="InterPro" id="IPR036968">
    <property type="entry name" value="Enolpyruvate_Tfrase_sf"/>
</dbReference>
<dbReference type="InterPro" id="IPR006264">
    <property type="entry name" value="EPSP_synthase"/>
</dbReference>
<dbReference type="InterPro" id="IPR023193">
    <property type="entry name" value="EPSP_synthase_CS"/>
</dbReference>
<dbReference type="InterPro" id="IPR013792">
    <property type="entry name" value="RNA3'P_cycl/enolpyr_Trfase_a/b"/>
</dbReference>
<dbReference type="NCBIfam" id="TIGR01356">
    <property type="entry name" value="aroA"/>
    <property type="match status" value="1"/>
</dbReference>
<dbReference type="PANTHER" id="PTHR21090">
    <property type="entry name" value="AROM/DEHYDROQUINATE SYNTHASE"/>
    <property type="match status" value="1"/>
</dbReference>
<dbReference type="PANTHER" id="PTHR21090:SF5">
    <property type="entry name" value="PENTAFUNCTIONAL AROM POLYPEPTIDE"/>
    <property type="match status" value="1"/>
</dbReference>
<dbReference type="Pfam" id="PF00275">
    <property type="entry name" value="EPSP_synthase"/>
    <property type="match status" value="1"/>
</dbReference>
<dbReference type="PIRSF" id="PIRSF000505">
    <property type="entry name" value="EPSPS"/>
    <property type="match status" value="1"/>
</dbReference>
<dbReference type="SUPFAM" id="SSF55205">
    <property type="entry name" value="EPT/RTPC-like"/>
    <property type="match status" value="1"/>
</dbReference>
<dbReference type="PROSITE" id="PS00104">
    <property type="entry name" value="EPSP_SYNTHASE_1"/>
    <property type="match status" value="1"/>
</dbReference>
<dbReference type="PROSITE" id="PS00885">
    <property type="entry name" value="EPSP_SYNTHASE_2"/>
    <property type="match status" value="1"/>
</dbReference>
<comment type="function">
    <text evidence="1">Catalyzes the transfer of the enolpyruvyl moiety of phosphoenolpyruvate (PEP) to the 5-hydroxyl of shikimate-3-phosphate (S3P) to produce enolpyruvyl shikimate-3-phosphate and inorganic phosphate.</text>
</comment>
<comment type="catalytic activity">
    <reaction evidence="1">
        <text>3-phosphoshikimate + phosphoenolpyruvate = 5-O-(1-carboxyvinyl)-3-phosphoshikimate + phosphate</text>
        <dbReference type="Rhea" id="RHEA:21256"/>
        <dbReference type="ChEBI" id="CHEBI:43474"/>
        <dbReference type="ChEBI" id="CHEBI:57701"/>
        <dbReference type="ChEBI" id="CHEBI:58702"/>
        <dbReference type="ChEBI" id="CHEBI:145989"/>
        <dbReference type="EC" id="2.5.1.19"/>
    </reaction>
    <physiologicalReaction direction="left-to-right" evidence="1">
        <dbReference type="Rhea" id="RHEA:21257"/>
    </physiologicalReaction>
</comment>
<comment type="pathway">
    <text evidence="1">Metabolic intermediate biosynthesis; chorismate biosynthesis; chorismate from D-erythrose 4-phosphate and phosphoenolpyruvate: step 6/7.</text>
</comment>
<comment type="subunit">
    <text evidence="1">Monomer.</text>
</comment>
<comment type="subcellular location">
    <subcellularLocation>
        <location evidence="1">Cytoplasm</location>
    </subcellularLocation>
</comment>
<comment type="similarity">
    <text evidence="1">Belongs to the EPSP synthase family.</text>
</comment>